<proteinExistence type="inferred from homology"/>
<dbReference type="EMBL" id="L77117">
    <property type="protein sequence ID" value="AAB99152.1"/>
    <property type="molecule type" value="Genomic_DNA"/>
</dbReference>
<dbReference type="PIR" id="B64444">
    <property type="entry name" value="B64444"/>
</dbReference>
<dbReference type="RefSeq" id="WP_010870666.1">
    <property type="nucleotide sequence ID" value="NC_000909.1"/>
</dbReference>
<dbReference type="STRING" id="243232.MJ_1155"/>
<dbReference type="PaxDb" id="243232-MJ_1155"/>
<dbReference type="EnsemblBacteria" id="AAB99152">
    <property type="protein sequence ID" value="AAB99152"/>
    <property type="gene ID" value="MJ_1155"/>
</dbReference>
<dbReference type="GeneID" id="1452051"/>
<dbReference type="KEGG" id="mja:MJ_1155"/>
<dbReference type="eggNOG" id="arCOG04984">
    <property type="taxonomic scope" value="Archaea"/>
</dbReference>
<dbReference type="HOGENOM" id="CLU_018288_2_0_2"/>
<dbReference type="InParanoid" id="Q58555"/>
<dbReference type="OrthoDB" id="358785at2157"/>
<dbReference type="PhylomeDB" id="Q58555"/>
<dbReference type="Proteomes" id="UP000000805">
    <property type="component" value="Chromosome"/>
</dbReference>
<dbReference type="GO" id="GO:0051539">
    <property type="term" value="F:4 iron, 4 sulfur cluster binding"/>
    <property type="evidence" value="ECO:0007669"/>
    <property type="project" value="UniProtKB-KW"/>
</dbReference>
<dbReference type="GO" id="GO:0003824">
    <property type="term" value="F:catalytic activity"/>
    <property type="evidence" value="ECO:0007669"/>
    <property type="project" value="InterPro"/>
</dbReference>
<dbReference type="GO" id="GO:0005506">
    <property type="term" value="F:iron ion binding"/>
    <property type="evidence" value="ECO:0007669"/>
    <property type="project" value="UniProtKB-UniRule"/>
</dbReference>
<dbReference type="Gene3D" id="3.80.30.20">
    <property type="entry name" value="tm_1862 like domain"/>
    <property type="match status" value="1"/>
</dbReference>
<dbReference type="HAMAP" id="MF_01251">
    <property type="entry name" value="UPF0313"/>
    <property type="match status" value="1"/>
</dbReference>
<dbReference type="InterPro" id="IPR006638">
    <property type="entry name" value="Elp3/MiaA/NifB-like_rSAM"/>
</dbReference>
<dbReference type="InterPro" id="IPR020612">
    <property type="entry name" value="Methylthiotransferase_CS"/>
</dbReference>
<dbReference type="InterPro" id="IPR007197">
    <property type="entry name" value="rSAM"/>
</dbReference>
<dbReference type="InterPro" id="IPR023404">
    <property type="entry name" value="rSAM_horseshoe"/>
</dbReference>
<dbReference type="InterPro" id="IPR022946">
    <property type="entry name" value="UPF0313"/>
</dbReference>
<dbReference type="InterPro" id="IPR024560">
    <property type="entry name" value="UPF0313_C"/>
</dbReference>
<dbReference type="InterPro" id="IPR013704">
    <property type="entry name" value="UPF0313_N"/>
</dbReference>
<dbReference type="NCBIfam" id="TIGR03904">
    <property type="entry name" value="SAM_YgiQ"/>
    <property type="match status" value="1"/>
</dbReference>
<dbReference type="PANTHER" id="PTHR32331">
    <property type="entry name" value="UPF0313 PROTEIN YGIQ"/>
    <property type="match status" value="1"/>
</dbReference>
<dbReference type="PANTHER" id="PTHR32331:SF0">
    <property type="entry name" value="UPF0313 PROTEIN YGIQ"/>
    <property type="match status" value="1"/>
</dbReference>
<dbReference type="Pfam" id="PF11842">
    <property type="entry name" value="DUF3362"/>
    <property type="match status" value="1"/>
</dbReference>
<dbReference type="Pfam" id="PF08497">
    <property type="entry name" value="Radical_SAM_N"/>
    <property type="match status" value="1"/>
</dbReference>
<dbReference type="SFLD" id="SFLDG01082">
    <property type="entry name" value="B12-binding_domain_containing"/>
    <property type="match status" value="1"/>
</dbReference>
<dbReference type="SFLD" id="SFLDS00029">
    <property type="entry name" value="Radical_SAM"/>
    <property type="match status" value="1"/>
</dbReference>
<dbReference type="SFLD" id="SFLDG01069">
    <property type="entry name" value="UPF0313"/>
    <property type="match status" value="1"/>
</dbReference>
<dbReference type="SMART" id="SM00729">
    <property type="entry name" value="Elp3"/>
    <property type="match status" value="1"/>
</dbReference>
<dbReference type="SUPFAM" id="SSF102114">
    <property type="entry name" value="Radical SAM enzymes"/>
    <property type="match status" value="1"/>
</dbReference>
<dbReference type="PROSITE" id="PS51918">
    <property type="entry name" value="RADICAL_SAM"/>
    <property type="match status" value="1"/>
</dbReference>
<sequence>MFLPTTKEEMDEWGWEELDIIIVTGDAYIDHYLFGASVVGRYLVEHGYRVGIIAQPDWKNLDDIKRLGKPNYFFAVTAGNLDSMLAHYTPQKRLRDFDSMSNEGIRKRPDRATIVYTNLIKRAFKGVPIALGGIEASLRRFSHYDYWDNKVRKSVLIDSKADILMYGMGEKSILAITKALESGENIKDLEINGTVVRVNERKIGDIKERYETKELPSHEEVVNSKEKYAEMHRKLMTMDKVIYQKVGNQYLVQFPPIYLTEKEMDEIYEMPFERRAHPSYSYVPGIVPVQFSVVTHRGCFGGCSFCSILHHQGKVIQNRSERSILKEIRKLLNHEDFKGVIQDIGAPTANMYRMGCKKGLADRCPKNCLYPEPCENLIINHKPLIKLYRKIRDIVGDDVRVYVRSGVRYDLIMYDEEYGEDYIKELSKYHVSGRLKVAPEHISKKVCKAIQKPDGRLFKKFLEKYREIAEKVGGIKEVLPYWLIAHPNCSIKEMIELAEFIHKNNCYSRQVQVFTPTPMTLSTTMYHTGINPITNEKVYVPYTYREKKIQKAICLYREEENWEKALEGFKMVGYKGVIYRWIMEQMEKKKKQKKDKNKKNRLN</sequence>
<protein>
    <recommendedName>
        <fullName>UPF0313 protein MJ1155</fullName>
    </recommendedName>
</protein>
<reference key="1">
    <citation type="journal article" date="1996" name="Science">
        <title>Complete genome sequence of the methanogenic archaeon, Methanococcus jannaschii.</title>
        <authorList>
            <person name="Bult C.J."/>
            <person name="White O."/>
            <person name="Olsen G.J."/>
            <person name="Zhou L."/>
            <person name="Fleischmann R.D."/>
            <person name="Sutton G.G."/>
            <person name="Blake J.A."/>
            <person name="FitzGerald L.M."/>
            <person name="Clayton R.A."/>
            <person name="Gocayne J.D."/>
            <person name="Kerlavage A.R."/>
            <person name="Dougherty B.A."/>
            <person name="Tomb J.-F."/>
            <person name="Adams M.D."/>
            <person name="Reich C.I."/>
            <person name="Overbeek R."/>
            <person name="Kirkness E.F."/>
            <person name="Weinstock K.G."/>
            <person name="Merrick J.M."/>
            <person name="Glodek A."/>
            <person name="Scott J.L."/>
            <person name="Geoghagen N.S.M."/>
            <person name="Weidman J.F."/>
            <person name="Fuhrmann J.L."/>
            <person name="Nguyen D."/>
            <person name="Utterback T.R."/>
            <person name="Kelley J.M."/>
            <person name="Peterson J.D."/>
            <person name="Sadow P.W."/>
            <person name="Hanna M.C."/>
            <person name="Cotton M.D."/>
            <person name="Roberts K.M."/>
            <person name="Hurst M.A."/>
            <person name="Kaine B.P."/>
            <person name="Borodovsky M."/>
            <person name="Klenk H.-P."/>
            <person name="Fraser C.M."/>
            <person name="Smith H.O."/>
            <person name="Woese C.R."/>
            <person name="Venter J.C."/>
        </authorList>
    </citation>
    <scope>NUCLEOTIDE SEQUENCE [LARGE SCALE GENOMIC DNA]</scope>
    <source>
        <strain>ATCC 43067 / DSM 2661 / JAL-1 / JCM 10045 / NBRC 100440</strain>
    </source>
</reference>
<accession>Q58555</accession>
<evidence type="ECO:0000255" key="1"/>
<evidence type="ECO:0000255" key="2">
    <source>
        <dbReference type="PROSITE-ProRule" id="PRU01266"/>
    </source>
</evidence>
<evidence type="ECO:0000305" key="3"/>
<feature type="chain" id="PRO_0000076404" description="UPF0313 protein MJ1155">
    <location>
        <begin position="1"/>
        <end position="603"/>
    </location>
</feature>
<feature type="domain" description="Radical SAM core" evidence="2">
    <location>
        <begin position="285"/>
        <end position="557"/>
    </location>
</feature>
<feature type="binding site" evidence="1">
    <location>
        <position position="299"/>
    </location>
    <ligand>
        <name>[4Fe-4S] cluster</name>
        <dbReference type="ChEBI" id="CHEBI:49883"/>
        <note>4Fe-4S-S-AdoMet</note>
    </ligand>
</feature>
<feature type="binding site" evidence="1">
    <location>
        <position position="303"/>
    </location>
    <ligand>
        <name>[4Fe-4S] cluster</name>
        <dbReference type="ChEBI" id="CHEBI:49883"/>
        <note>4Fe-4S-S-AdoMet</note>
    </ligand>
</feature>
<feature type="binding site" evidence="1">
    <location>
        <position position="306"/>
    </location>
    <ligand>
        <name>[4Fe-4S] cluster</name>
        <dbReference type="ChEBI" id="CHEBI:49883"/>
        <note>4Fe-4S-S-AdoMet</note>
    </ligand>
</feature>
<name>Y1155_METJA</name>
<comment type="cofactor">
    <cofactor evidence="3">
        <name>[4Fe-4S] cluster</name>
        <dbReference type="ChEBI" id="CHEBI:49883"/>
    </cofactor>
    <text evidence="3">Binds 1 [4Fe-4S] cluster. The cluster is coordinated with 3 cysteines and an exchangeable S-adenosyl-L-methionine.</text>
</comment>
<comment type="similarity">
    <text evidence="3">Belongs to the UPF0313 family.</text>
</comment>
<keyword id="KW-0004">4Fe-4S</keyword>
<keyword id="KW-0408">Iron</keyword>
<keyword id="KW-0411">Iron-sulfur</keyword>
<keyword id="KW-0479">Metal-binding</keyword>
<keyword id="KW-1185">Reference proteome</keyword>
<keyword id="KW-0949">S-adenosyl-L-methionine</keyword>
<organism>
    <name type="scientific">Methanocaldococcus jannaschii (strain ATCC 43067 / DSM 2661 / JAL-1 / JCM 10045 / NBRC 100440)</name>
    <name type="common">Methanococcus jannaschii</name>
    <dbReference type="NCBI Taxonomy" id="243232"/>
    <lineage>
        <taxon>Archaea</taxon>
        <taxon>Methanobacteriati</taxon>
        <taxon>Methanobacteriota</taxon>
        <taxon>Methanomada group</taxon>
        <taxon>Methanococci</taxon>
        <taxon>Methanococcales</taxon>
        <taxon>Methanocaldococcaceae</taxon>
        <taxon>Methanocaldococcus</taxon>
    </lineage>
</organism>
<gene>
    <name type="ordered locus">MJ1155</name>
</gene>